<protein>
    <recommendedName>
        <fullName evidence="1">Imidazolonepropionase</fullName>
        <ecNumber evidence="1">3.5.2.7</ecNumber>
    </recommendedName>
    <alternativeName>
        <fullName evidence="1">Imidazolone-5-propionate hydrolase</fullName>
    </alternativeName>
</protein>
<name>HUTI_PSEPG</name>
<sequence>MRTLWQHCHVATMAEGRYSAIEDAAIVTSAGLIEWIGPRAELAPVEADRTVDLGGAWVTPGLIDCHTHAVFGGNRSGEFEQRLQGVSYAEIAAQGGGIASTVRATRAASEDELFASARQRVQALMRDGVTTIEIKSGYGLDLANERKMLRVARRLADELPLAVRATCLAAHALPPEYAGRADDYIAHICDEMLPALAAEGLVDAVDAFCEHLAFSPAQVERLFIKARALGLPVKLHAEQLSSLHGSSLAARYQALSADHLEFMTEEDAIAMAKAGTVAVLLPGAFYFLRETQLPPMDALRRHGVKIALASDLNPGTSPGLSLRLMLNMGCTCFRMTPEEALAGVTVHAATALGLGDSHGSLEVGKVADFVAWQIERPADLAYWLGGDLPKRVVRKGHEISN</sequence>
<reference key="1">
    <citation type="submission" date="2008-01" db="EMBL/GenBank/DDBJ databases">
        <title>Complete sequence of Pseudomonas putida GB-1.</title>
        <authorList>
            <consortium name="US DOE Joint Genome Institute"/>
            <person name="Copeland A."/>
            <person name="Lucas S."/>
            <person name="Lapidus A."/>
            <person name="Barry K."/>
            <person name="Glavina del Rio T."/>
            <person name="Dalin E."/>
            <person name="Tice H."/>
            <person name="Pitluck S."/>
            <person name="Bruce D."/>
            <person name="Goodwin L."/>
            <person name="Chertkov O."/>
            <person name="Brettin T."/>
            <person name="Detter J.C."/>
            <person name="Han C."/>
            <person name="Kuske C.R."/>
            <person name="Schmutz J."/>
            <person name="Larimer F."/>
            <person name="Land M."/>
            <person name="Hauser L."/>
            <person name="Kyrpides N."/>
            <person name="Kim E."/>
            <person name="McCarthy J.K."/>
            <person name="Richardson P."/>
        </authorList>
    </citation>
    <scope>NUCLEOTIDE SEQUENCE [LARGE SCALE GENOMIC DNA]</scope>
    <source>
        <strain>GB-1</strain>
    </source>
</reference>
<comment type="function">
    <text evidence="1">Catalyzes the hydrolytic cleavage of the carbon-nitrogen bond in imidazolone-5-propanoate to yield N-formimidoyl-L-glutamate. It is the third step in the universal histidine degradation pathway.</text>
</comment>
<comment type="catalytic activity">
    <reaction evidence="1">
        <text>4-imidazolone-5-propanoate + H2O = N-formimidoyl-L-glutamate</text>
        <dbReference type="Rhea" id="RHEA:23660"/>
        <dbReference type="ChEBI" id="CHEBI:15377"/>
        <dbReference type="ChEBI" id="CHEBI:58928"/>
        <dbReference type="ChEBI" id="CHEBI:77893"/>
        <dbReference type="EC" id="3.5.2.7"/>
    </reaction>
</comment>
<comment type="cofactor">
    <cofactor evidence="1">
        <name>Zn(2+)</name>
        <dbReference type="ChEBI" id="CHEBI:29105"/>
    </cofactor>
    <cofactor evidence="1">
        <name>Fe(3+)</name>
        <dbReference type="ChEBI" id="CHEBI:29034"/>
    </cofactor>
    <text evidence="1">Binds 1 zinc or iron ion per subunit.</text>
</comment>
<comment type="pathway">
    <text evidence="1">Amino-acid degradation; L-histidine degradation into L-glutamate; N-formimidoyl-L-glutamate from L-histidine: step 3/3.</text>
</comment>
<comment type="subcellular location">
    <subcellularLocation>
        <location evidence="1">Cytoplasm</location>
    </subcellularLocation>
</comment>
<comment type="similarity">
    <text evidence="1">Belongs to the metallo-dependent hydrolases superfamily. HutI family.</text>
</comment>
<gene>
    <name evidence="1" type="primary">hutI</name>
    <name type="ordered locus">PputGB1_5080</name>
</gene>
<accession>B0KM55</accession>
<organism>
    <name type="scientific">Pseudomonas putida (strain GB-1)</name>
    <dbReference type="NCBI Taxonomy" id="76869"/>
    <lineage>
        <taxon>Bacteria</taxon>
        <taxon>Pseudomonadati</taxon>
        <taxon>Pseudomonadota</taxon>
        <taxon>Gammaproteobacteria</taxon>
        <taxon>Pseudomonadales</taxon>
        <taxon>Pseudomonadaceae</taxon>
        <taxon>Pseudomonas</taxon>
    </lineage>
</organism>
<feature type="chain" id="PRO_1000079823" description="Imidazolonepropionase">
    <location>
        <begin position="1"/>
        <end position="401"/>
    </location>
</feature>
<feature type="binding site" evidence="1">
    <location>
        <position position="66"/>
    </location>
    <ligand>
        <name>Fe(3+)</name>
        <dbReference type="ChEBI" id="CHEBI:29034"/>
    </ligand>
</feature>
<feature type="binding site" evidence="1">
    <location>
        <position position="66"/>
    </location>
    <ligand>
        <name>Zn(2+)</name>
        <dbReference type="ChEBI" id="CHEBI:29105"/>
    </ligand>
</feature>
<feature type="binding site" evidence="1">
    <location>
        <position position="68"/>
    </location>
    <ligand>
        <name>Fe(3+)</name>
        <dbReference type="ChEBI" id="CHEBI:29034"/>
    </ligand>
</feature>
<feature type="binding site" evidence="1">
    <location>
        <position position="68"/>
    </location>
    <ligand>
        <name>Zn(2+)</name>
        <dbReference type="ChEBI" id="CHEBI:29105"/>
    </ligand>
</feature>
<feature type="binding site" evidence="1">
    <location>
        <position position="75"/>
    </location>
    <ligand>
        <name>4-imidazolone-5-propanoate</name>
        <dbReference type="ChEBI" id="CHEBI:77893"/>
    </ligand>
</feature>
<feature type="binding site" evidence="1">
    <location>
        <position position="138"/>
    </location>
    <ligand>
        <name>4-imidazolone-5-propanoate</name>
        <dbReference type="ChEBI" id="CHEBI:77893"/>
    </ligand>
</feature>
<feature type="binding site" evidence="1">
    <location>
        <position position="138"/>
    </location>
    <ligand>
        <name>N-formimidoyl-L-glutamate</name>
        <dbReference type="ChEBI" id="CHEBI:58928"/>
    </ligand>
</feature>
<feature type="binding site" evidence="1">
    <location>
        <position position="171"/>
    </location>
    <ligand>
        <name>4-imidazolone-5-propanoate</name>
        <dbReference type="ChEBI" id="CHEBI:77893"/>
    </ligand>
</feature>
<feature type="binding site" evidence="1">
    <location>
        <position position="236"/>
    </location>
    <ligand>
        <name>Fe(3+)</name>
        <dbReference type="ChEBI" id="CHEBI:29034"/>
    </ligand>
</feature>
<feature type="binding site" evidence="1">
    <location>
        <position position="236"/>
    </location>
    <ligand>
        <name>Zn(2+)</name>
        <dbReference type="ChEBI" id="CHEBI:29105"/>
    </ligand>
</feature>
<feature type="binding site" evidence="1">
    <location>
        <position position="239"/>
    </location>
    <ligand>
        <name>4-imidazolone-5-propanoate</name>
        <dbReference type="ChEBI" id="CHEBI:77893"/>
    </ligand>
</feature>
<feature type="binding site" evidence="1">
    <location>
        <position position="311"/>
    </location>
    <ligand>
        <name>Fe(3+)</name>
        <dbReference type="ChEBI" id="CHEBI:29034"/>
    </ligand>
</feature>
<feature type="binding site" evidence="1">
    <location>
        <position position="311"/>
    </location>
    <ligand>
        <name>Zn(2+)</name>
        <dbReference type="ChEBI" id="CHEBI:29105"/>
    </ligand>
</feature>
<feature type="binding site" evidence="1">
    <location>
        <position position="313"/>
    </location>
    <ligand>
        <name>N-formimidoyl-L-glutamate</name>
        <dbReference type="ChEBI" id="CHEBI:58928"/>
    </ligand>
</feature>
<feature type="binding site" evidence="1">
    <location>
        <position position="315"/>
    </location>
    <ligand>
        <name>N-formimidoyl-L-glutamate</name>
        <dbReference type="ChEBI" id="CHEBI:58928"/>
    </ligand>
</feature>
<feature type="binding site" evidence="1">
    <location>
        <position position="316"/>
    </location>
    <ligand>
        <name>4-imidazolone-5-propanoate</name>
        <dbReference type="ChEBI" id="CHEBI:77893"/>
    </ligand>
</feature>
<keyword id="KW-0963">Cytoplasm</keyword>
<keyword id="KW-0369">Histidine metabolism</keyword>
<keyword id="KW-0378">Hydrolase</keyword>
<keyword id="KW-0408">Iron</keyword>
<keyword id="KW-0479">Metal-binding</keyword>
<keyword id="KW-0862">Zinc</keyword>
<evidence type="ECO:0000255" key="1">
    <source>
        <dbReference type="HAMAP-Rule" id="MF_00372"/>
    </source>
</evidence>
<dbReference type="EC" id="3.5.2.7" evidence="1"/>
<dbReference type="EMBL" id="CP000926">
    <property type="protein sequence ID" value="ABZ00965.1"/>
    <property type="molecule type" value="Genomic_DNA"/>
</dbReference>
<dbReference type="RefSeq" id="WP_012274586.1">
    <property type="nucleotide sequence ID" value="NC_010322.1"/>
</dbReference>
<dbReference type="SMR" id="B0KM55"/>
<dbReference type="KEGG" id="ppg:PputGB1_5080"/>
<dbReference type="eggNOG" id="COG1228">
    <property type="taxonomic scope" value="Bacteria"/>
</dbReference>
<dbReference type="HOGENOM" id="CLU_041647_0_0_6"/>
<dbReference type="UniPathway" id="UPA00379">
    <property type="reaction ID" value="UER00551"/>
</dbReference>
<dbReference type="Proteomes" id="UP000002157">
    <property type="component" value="Chromosome"/>
</dbReference>
<dbReference type="GO" id="GO:0005737">
    <property type="term" value="C:cytoplasm"/>
    <property type="evidence" value="ECO:0007669"/>
    <property type="project" value="UniProtKB-SubCell"/>
</dbReference>
<dbReference type="GO" id="GO:0050480">
    <property type="term" value="F:imidazolonepropionase activity"/>
    <property type="evidence" value="ECO:0007669"/>
    <property type="project" value="UniProtKB-UniRule"/>
</dbReference>
<dbReference type="GO" id="GO:0005506">
    <property type="term" value="F:iron ion binding"/>
    <property type="evidence" value="ECO:0007669"/>
    <property type="project" value="UniProtKB-UniRule"/>
</dbReference>
<dbReference type="GO" id="GO:0008270">
    <property type="term" value="F:zinc ion binding"/>
    <property type="evidence" value="ECO:0007669"/>
    <property type="project" value="UniProtKB-UniRule"/>
</dbReference>
<dbReference type="GO" id="GO:0019556">
    <property type="term" value="P:L-histidine catabolic process to glutamate and formamide"/>
    <property type="evidence" value="ECO:0007669"/>
    <property type="project" value="UniProtKB-UniPathway"/>
</dbReference>
<dbReference type="GO" id="GO:0019557">
    <property type="term" value="P:L-histidine catabolic process to glutamate and formate"/>
    <property type="evidence" value="ECO:0007669"/>
    <property type="project" value="UniProtKB-UniPathway"/>
</dbReference>
<dbReference type="CDD" id="cd01296">
    <property type="entry name" value="Imidazolone-5PH"/>
    <property type="match status" value="1"/>
</dbReference>
<dbReference type="FunFam" id="3.20.20.140:FF:000007">
    <property type="entry name" value="Imidazolonepropionase"/>
    <property type="match status" value="1"/>
</dbReference>
<dbReference type="Gene3D" id="3.20.20.140">
    <property type="entry name" value="Metal-dependent hydrolases"/>
    <property type="match status" value="1"/>
</dbReference>
<dbReference type="Gene3D" id="2.30.40.10">
    <property type="entry name" value="Urease, subunit C, domain 1"/>
    <property type="match status" value="1"/>
</dbReference>
<dbReference type="HAMAP" id="MF_00372">
    <property type="entry name" value="HutI"/>
    <property type="match status" value="1"/>
</dbReference>
<dbReference type="InterPro" id="IPR006680">
    <property type="entry name" value="Amidohydro-rel"/>
</dbReference>
<dbReference type="InterPro" id="IPR005920">
    <property type="entry name" value="HutI"/>
</dbReference>
<dbReference type="InterPro" id="IPR011059">
    <property type="entry name" value="Metal-dep_hydrolase_composite"/>
</dbReference>
<dbReference type="InterPro" id="IPR032466">
    <property type="entry name" value="Metal_Hydrolase"/>
</dbReference>
<dbReference type="NCBIfam" id="TIGR01224">
    <property type="entry name" value="hutI"/>
    <property type="match status" value="1"/>
</dbReference>
<dbReference type="PANTHER" id="PTHR42752">
    <property type="entry name" value="IMIDAZOLONEPROPIONASE"/>
    <property type="match status" value="1"/>
</dbReference>
<dbReference type="PANTHER" id="PTHR42752:SF1">
    <property type="entry name" value="IMIDAZOLONEPROPIONASE-RELATED"/>
    <property type="match status" value="1"/>
</dbReference>
<dbReference type="Pfam" id="PF01979">
    <property type="entry name" value="Amidohydro_1"/>
    <property type="match status" value="1"/>
</dbReference>
<dbReference type="SUPFAM" id="SSF51338">
    <property type="entry name" value="Composite domain of metallo-dependent hydrolases"/>
    <property type="match status" value="1"/>
</dbReference>
<dbReference type="SUPFAM" id="SSF51556">
    <property type="entry name" value="Metallo-dependent hydrolases"/>
    <property type="match status" value="1"/>
</dbReference>
<proteinExistence type="inferred from homology"/>